<dbReference type="EMBL" id="Z54205">
    <property type="protein sequence ID" value="CAA90912.1"/>
    <property type="molecule type" value="Genomic_DNA"/>
</dbReference>
<dbReference type="SMR" id="Q48544"/>
<dbReference type="GO" id="GO:0003700">
    <property type="term" value="F:DNA-binding transcription factor activity"/>
    <property type="evidence" value="ECO:0007669"/>
    <property type="project" value="TreeGrafter"/>
</dbReference>
<dbReference type="GO" id="GO:0000976">
    <property type="term" value="F:transcription cis-regulatory region binding"/>
    <property type="evidence" value="ECO:0007669"/>
    <property type="project" value="TreeGrafter"/>
</dbReference>
<dbReference type="CDD" id="cd01392">
    <property type="entry name" value="HTH_LacI"/>
    <property type="match status" value="1"/>
</dbReference>
<dbReference type="CDD" id="cd06298">
    <property type="entry name" value="PBP1_CcpA"/>
    <property type="match status" value="1"/>
</dbReference>
<dbReference type="FunFam" id="1.10.260.40:FF:000002">
    <property type="entry name" value="HTH-type transcriptional repressor PurR"/>
    <property type="match status" value="1"/>
</dbReference>
<dbReference type="Gene3D" id="3.40.50.2300">
    <property type="match status" value="2"/>
</dbReference>
<dbReference type="Gene3D" id="1.10.260.40">
    <property type="entry name" value="lambda repressor-like DNA-binding domains"/>
    <property type="match status" value="1"/>
</dbReference>
<dbReference type="InterPro" id="IPR000843">
    <property type="entry name" value="HTH_LacI"/>
</dbReference>
<dbReference type="InterPro" id="IPR046335">
    <property type="entry name" value="LacI/GalR-like_sensor"/>
</dbReference>
<dbReference type="InterPro" id="IPR010982">
    <property type="entry name" value="Lambda_DNA-bd_dom_sf"/>
</dbReference>
<dbReference type="InterPro" id="IPR028082">
    <property type="entry name" value="Peripla_BP_I"/>
</dbReference>
<dbReference type="PANTHER" id="PTHR30146:SF150">
    <property type="entry name" value="ARABINOSE METABOLISM TRANSCRIPTIONAL REPRESSOR"/>
    <property type="match status" value="1"/>
</dbReference>
<dbReference type="PANTHER" id="PTHR30146">
    <property type="entry name" value="LACI-RELATED TRANSCRIPTIONAL REPRESSOR"/>
    <property type="match status" value="1"/>
</dbReference>
<dbReference type="Pfam" id="PF00356">
    <property type="entry name" value="LacI"/>
    <property type="match status" value="1"/>
</dbReference>
<dbReference type="Pfam" id="PF13377">
    <property type="entry name" value="Peripla_BP_3"/>
    <property type="match status" value="1"/>
</dbReference>
<dbReference type="PRINTS" id="PR00036">
    <property type="entry name" value="HTHLACI"/>
</dbReference>
<dbReference type="SMART" id="SM00354">
    <property type="entry name" value="HTH_LACI"/>
    <property type="match status" value="1"/>
</dbReference>
<dbReference type="SUPFAM" id="SSF47413">
    <property type="entry name" value="lambda repressor-like DNA-binding domains"/>
    <property type="match status" value="1"/>
</dbReference>
<dbReference type="SUPFAM" id="SSF53822">
    <property type="entry name" value="Periplasmic binding protein-like I"/>
    <property type="match status" value="1"/>
</dbReference>
<dbReference type="PROSITE" id="PS00356">
    <property type="entry name" value="HTH_LACI_1"/>
    <property type="match status" value="1"/>
</dbReference>
<dbReference type="PROSITE" id="PS50932">
    <property type="entry name" value="HTH_LACI_2"/>
    <property type="match status" value="1"/>
</dbReference>
<gene>
    <name type="primary">pepR1</name>
</gene>
<proteinExistence type="predicted"/>
<reference key="1">
    <citation type="submission" date="1995-09" db="EMBL/GenBank/DDBJ databases">
        <authorList>
            <person name="Stucky K."/>
            <person name="Schick J."/>
            <person name="Klein J.R."/>
            <person name="Henrich B."/>
            <person name="Plapp R."/>
        </authorList>
    </citation>
    <scope>NUCLEOTIDE SEQUENCE [GENOMIC DNA]</scope>
    <source>
        <strain>DSM 7290</strain>
    </source>
</reference>
<feature type="chain" id="PRO_0000107975" description="HTH-type transcriptional regulator pepR1">
    <location>
        <begin position="1"/>
        <end position="333"/>
    </location>
</feature>
<feature type="domain" description="HTH lacI-type" evidence="1">
    <location>
        <begin position="6"/>
        <end position="60"/>
    </location>
</feature>
<feature type="DNA-binding region" description="H-T-H motif" evidence="1">
    <location>
        <begin position="8"/>
        <end position="27"/>
    </location>
</feature>
<sequence length="333" mass="36950">MNKQDVTIYDVAREAKVSMATVSRVVNGNNNVRKETRDRVMEVIKRLHYQPNAVAQGLASKRTTTVGLIVPDLTNLYFAELSKGIDDIAVLYKYNIIISSVENRLMKEDAVIQGLLNKQVDGVIYMSNKLSEEAAEAFKRTDTPVVLAGTVSDNLEFPSVNIDYKKADTEALNLLLNDGKKKLALIVGDKEASINRNYRIPAFEKFVADNELEGCEIFDNIKDYSDGYNLYPELAKKGINGAIITKDVSSVGLLNSALDRGAKVPEDFEIITASATQIASVVRPALTTIKQPLYDLGAVAMRMLTKLMNDESLEDKHIILPYELIKKQSTLNK</sequence>
<protein>
    <recommendedName>
        <fullName>HTH-type transcriptional regulator pepR1</fullName>
    </recommendedName>
</protein>
<evidence type="ECO:0000255" key="1">
    <source>
        <dbReference type="PROSITE-ProRule" id="PRU00111"/>
    </source>
</evidence>
<name>PEPR_LACDL</name>
<organism>
    <name type="scientific">Lactobacillus delbrueckii subsp. lactis</name>
    <dbReference type="NCBI Taxonomy" id="29397"/>
    <lineage>
        <taxon>Bacteria</taxon>
        <taxon>Bacillati</taxon>
        <taxon>Bacillota</taxon>
        <taxon>Bacilli</taxon>
        <taxon>Lactobacillales</taxon>
        <taxon>Lactobacillaceae</taxon>
        <taxon>Lactobacillus</taxon>
    </lineage>
</organism>
<keyword id="KW-0238">DNA-binding</keyword>
<keyword id="KW-0804">Transcription</keyword>
<keyword id="KW-0805">Transcription regulation</keyword>
<accession>Q48544</accession>
<comment type="function">
    <text>Transcriptional regulator of the pepQ gene for prolidase.</text>
</comment>